<gene>
    <name evidence="1" type="primary">ureB</name>
    <name type="ordered locus">Bxeno_A0758</name>
    <name type="ORF">Bxe_A3693</name>
</gene>
<dbReference type="EC" id="3.5.1.5" evidence="1"/>
<dbReference type="EMBL" id="CP000270">
    <property type="protein sequence ID" value="ABE29296.1"/>
    <property type="molecule type" value="Genomic_DNA"/>
</dbReference>
<dbReference type="RefSeq" id="WP_007175991.1">
    <property type="nucleotide sequence ID" value="NC_007951.1"/>
</dbReference>
<dbReference type="SMR" id="Q144E3"/>
<dbReference type="STRING" id="266265.Bxe_A3693"/>
<dbReference type="KEGG" id="bxb:DR64_1385"/>
<dbReference type="KEGG" id="bxe:Bxe_A3693"/>
<dbReference type="eggNOG" id="COG0832">
    <property type="taxonomic scope" value="Bacteria"/>
</dbReference>
<dbReference type="OrthoDB" id="9797217at2"/>
<dbReference type="UniPathway" id="UPA00258">
    <property type="reaction ID" value="UER00370"/>
</dbReference>
<dbReference type="Proteomes" id="UP000001817">
    <property type="component" value="Chromosome 1"/>
</dbReference>
<dbReference type="GO" id="GO:0035550">
    <property type="term" value="C:urease complex"/>
    <property type="evidence" value="ECO:0007669"/>
    <property type="project" value="InterPro"/>
</dbReference>
<dbReference type="GO" id="GO:0009039">
    <property type="term" value="F:urease activity"/>
    <property type="evidence" value="ECO:0007669"/>
    <property type="project" value="UniProtKB-UniRule"/>
</dbReference>
<dbReference type="GO" id="GO:0043419">
    <property type="term" value="P:urea catabolic process"/>
    <property type="evidence" value="ECO:0007669"/>
    <property type="project" value="UniProtKB-UniRule"/>
</dbReference>
<dbReference type="CDD" id="cd00407">
    <property type="entry name" value="Urease_beta"/>
    <property type="match status" value="1"/>
</dbReference>
<dbReference type="FunFam" id="2.10.150.10:FF:000001">
    <property type="entry name" value="Urease subunit beta"/>
    <property type="match status" value="1"/>
</dbReference>
<dbReference type="Gene3D" id="2.10.150.10">
    <property type="entry name" value="Urease, beta subunit"/>
    <property type="match status" value="1"/>
</dbReference>
<dbReference type="HAMAP" id="MF_01954">
    <property type="entry name" value="Urease_beta"/>
    <property type="match status" value="1"/>
</dbReference>
<dbReference type="InterPro" id="IPR002019">
    <property type="entry name" value="Urease_beta-like"/>
</dbReference>
<dbReference type="InterPro" id="IPR036461">
    <property type="entry name" value="Urease_betasu_sf"/>
</dbReference>
<dbReference type="InterPro" id="IPR050069">
    <property type="entry name" value="Urease_subunit"/>
</dbReference>
<dbReference type="NCBIfam" id="NF009682">
    <property type="entry name" value="PRK13203.1"/>
    <property type="match status" value="1"/>
</dbReference>
<dbReference type="NCBIfam" id="TIGR00192">
    <property type="entry name" value="urease_beta"/>
    <property type="match status" value="1"/>
</dbReference>
<dbReference type="PANTHER" id="PTHR33569">
    <property type="entry name" value="UREASE"/>
    <property type="match status" value="1"/>
</dbReference>
<dbReference type="PANTHER" id="PTHR33569:SF1">
    <property type="entry name" value="UREASE"/>
    <property type="match status" value="1"/>
</dbReference>
<dbReference type="Pfam" id="PF00699">
    <property type="entry name" value="Urease_beta"/>
    <property type="match status" value="1"/>
</dbReference>
<dbReference type="SUPFAM" id="SSF51278">
    <property type="entry name" value="Urease, beta-subunit"/>
    <property type="match status" value="1"/>
</dbReference>
<feature type="chain" id="PRO_1000070728" description="Urease subunit beta">
    <location>
        <begin position="1"/>
        <end position="101"/>
    </location>
</feature>
<proteinExistence type="inferred from homology"/>
<sequence>MIPGELLIDDGEHELNAGRATVTVVVSNTGDRPVQIGSHYHFYEVNDALAFDRAAARGFRLNIAAGTAVRFEPGQERTVELVELAGDRIVYGFNGKVMGKL</sequence>
<name>URE2_PARXL</name>
<keyword id="KW-0963">Cytoplasm</keyword>
<keyword id="KW-0378">Hydrolase</keyword>
<keyword id="KW-1185">Reference proteome</keyword>
<evidence type="ECO:0000255" key="1">
    <source>
        <dbReference type="HAMAP-Rule" id="MF_01954"/>
    </source>
</evidence>
<organism>
    <name type="scientific">Paraburkholderia xenovorans (strain LB400)</name>
    <dbReference type="NCBI Taxonomy" id="266265"/>
    <lineage>
        <taxon>Bacteria</taxon>
        <taxon>Pseudomonadati</taxon>
        <taxon>Pseudomonadota</taxon>
        <taxon>Betaproteobacteria</taxon>
        <taxon>Burkholderiales</taxon>
        <taxon>Burkholderiaceae</taxon>
        <taxon>Paraburkholderia</taxon>
    </lineage>
</organism>
<reference key="1">
    <citation type="journal article" date="2006" name="Proc. Natl. Acad. Sci. U.S.A.">
        <title>Burkholderia xenovorans LB400 harbors a multi-replicon, 9.73-Mbp genome shaped for versatility.</title>
        <authorList>
            <person name="Chain P.S.G."/>
            <person name="Denef V.J."/>
            <person name="Konstantinidis K.T."/>
            <person name="Vergez L.M."/>
            <person name="Agullo L."/>
            <person name="Reyes V.L."/>
            <person name="Hauser L."/>
            <person name="Cordova M."/>
            <person name="Gomez L."/>
            <person name="Gonzalez M."/>
            <person name="Land M."/>
            <person name="Lao V."/>
            <person name="Larimer F."/>
            <person name="LiPuma J.J."/>
            <person name="Mahenthiralingam E."/>
            <person name="Malfatti S.A."/>
            <person name="Marx C.J."/>
            <person name="Parnell J.J."/>
            <person name="Ramette A."/>
            <person name="Richardson P."/>
            <person name="Seeger M."/>
            <person name="Smith D."/>
            <person name="Spilker T."/>
            <person name="Sul W.J."/>
            <person name="Tsoi T.V."/>
            <person name="Ulrich L.E."/>
            <person name="Zhulin I.B."/>
            <person name="Tiedje J.M."/>
        </authorList>
    </citation>
    <scope>NUCLEOTIDE SEQUENCE [LARGE SCALE GENOMIC DNA]</scope>
    <source>
        <strain>LB400</strain>
    </source>
</reference>
<accession>Q144E3</accession>
<protein>
    <recommendedName>
        <fullName evidence="1">Urease subunit beta</fullName>
        <ecNumber evidence="1">3.5.1.5</ecNumber>
    </recommendedName>
    <alternativeName>
        <fullName evidence="1">Urea amidohydrolase subunit beta</fullName>
    </alternativeName>
</protein>
<comment type="catalytic activity">
    <reaction evidence="1">
        <text>urea + 2 H2O + H(+) = hydrogencarbonate + 2 NH4(+)</text>
        <dbReference type="Rhea" id="RHEA:20557"/>
        <dbReference type="ChEBI" id="CHEBI:15377"/>
        <dbReference type="ChEBI" id="CHEBI:15378"/>
        <dbReference type="ChEBI" id="CHEBI:16199"/>
        <dbReference type="ChEBI" id="CHEBI:17544"/>
        <dbReference type="ChEBI" id="CHEBI:28938"/>
        <dbReference type="EC" id="3.5.1.5"/>
    </reaction>
</comment>
<comment type="pathway">
    <text evidence="1">Nitrogen metabolism; urea degradation; CO(2) and NH(3) from urea (urease route): step 1/1.</text>
</comment>
<comment type="subunit">
    <text evidence="1">Heterotrimer of UreA (gamma), UreB (beta) and UreC (alpha) subunits. Three heterotrimers associate to form the active enzyme.</text>
</comment>
<comment type="subcellular location">
    <subcellularLocation>
        <location evidence="1">Cytoplasm</location>
    </subcellularLocation>
</comment>
<comment type="similarity">
    <text evidence="1">Belongs to the urease beta subunit family.</text>
</comment>